<dbReference type="EMBL" id="CP000026">
    <property type="protein sequence ID" value="AAV76050.1"/>
    <property type="molecule type" value="Genomic_DNA"/>
</dbReference>
<dbReference type="RefSeq" id="WP_000516126.1">
    <property type="nucleotide sequence ID" value="NC_006511.1"/>
</dbReference>
<dbReference type="SMR" id="Q5PDJ5"/>
<dbReference type="GeneID" id="66754552"/>
<dbReference type="KEGG" id="spt:SPA0012"/>
<dbReference type="HOGENOM" id="CLU_005965_2_1_6"/>
<dbReference type="Proteomes" id="UP000008185">
    <property type="component" value="Chromosome"/>
</dbReference>
<dbReference type="GO" id="GO:0005524">
    <property type="term" value="F:ATP binding"/>
    <property type="evidence" value="ECO:0007669"/>
    <property type="project" value="UniProtKB-UniRule"/>
</dbReference>
<dbReference type="GO" id="GO:0140662">
    <property type="term" value="F:ATP-dependent protein folding chaperone"/>
    <property type="evidence" value="ECO:0007669"/>
    <property type="project" value="InterPro"/>
</dbReference>
<dbReference type="GO" id="GO:0051082">
    <property type="term" value="F:unfolded protein binding"/>
    <property type="evidence" value="ECO:0007669"/>
    <property type="project" value="InterPro"/>
</dbReference>
<dbReference type="CDD" id="cd10234">
    <property type="entry name" value="ASKHA_NBD_HSP70_DnaK-like"/>
    <property type="match status" value="1"/>
</dbReference>
<dbReference type="FunFam" id="2.60.34.10:FF:000014">
    <property type="entry name" value="Chaperone protein DnaK HSP70"/>
    <property type="match status" value="1"/>
</dbReference>
<dbReference type="FunFam" id="1.20.1270.10:FF:000001">
    <property type="entry name" value="Molecular chaperone DnaK"/>
    <property type="match status" value="1"/>
</dbReference>
<dbReference type="FunFam" id="3.30.420.40:FF:000004">
    <property type="entry name" value="Molecular chaperone DnaK"/>
    <property type="match status" value="1"/>
</dbReference>
<dbReference type="FunFam" id="3.90.640.10:FF:000003">
    <property type="entry name" value="Molecular chaperone DnaK"/>
    <property type="match status" value="1"/>
</dbReference>
<dbReference type="Gene3D" id="1.20.1270.10">
    <property type="match status" value="1"/>
</dbReference>
<dbReference type="Gene3D" id="3.30.420.40">
    <property type="match status" value="2"/>
</dbReference>
<dbReference type="Gene3D" id="3.90.640.10">
    <property type="entry name" value="Actin, Chain A, domain 4"/>
    <property type="match status" value="1"/>
</dbReference>
<dbReference type="Gene3D" id="2.60.34.10">
    <property type="entry name" value="Substrate Binding Domain Of DNAk, Chain A, domain 1"/>
    <property type="match status" value="1"/>
</dbReference>
<dbReference type="HAMAP" id="MF_00332">
    <property type="entry name" value="DnaK"/>
    <property type="match status" value="1"/>
</dbReference>
<dbReference type="InterPro" id="IPR043129">
    <property type="entry name" value="ATPase_NBD"/>
</dbReference>
<dbReference type="InterPro" id="IPR012725">
    <property type="entry name" value="Chaperone_DnaK"/>
</dbReference>
<dbReference type="InterPro" id="IPR018181">
    <property type="entry name" value="Heat_shock_70_CS"/>
</dbReference>
<dbReference type="InterPro" id="IPR029048">
    <property type="entry name" value="HSP70_C_sf"/>
</dbReference>
<dbReference type="InterPro" id="IPR029047">
    <property type="entry name" value="HSP70_peptide-bd_sf"/>
</dbReference>
<dbReference type="InterPro" id="IPR013126">
    <property type="entry name" value="Hsp_70_fam"/>
</dbReference>
<dbReference type="NCBIfam" id="NF001413">
    <property type="entry name" value="PRK00290.1"/>
    <property type="match status" value="1"/>
</dbReference>
<dbReference type="NCBIfam" id="NF003520">
    <property type="entry name" value="PRK05183.1"/>
    <property type="match status" value="1"/>
</dbReference>
<dbReference type="NCBIfam" id="TIGR02350">
    <property type="entry name" value="prok_dnaK"/>
    <property type="match status" value="1"/>
</dbReference>
<dbReference type="PANTHER" id="PTHR19375">
    <property type="entry name" value="HEAT SHOCK PROTEIN 70KDA"/>
    <property type="match status" value="1"/>
</dbReference>
<dbReference type="Pfam" id="PF00012">
    <property type="entry name" value="HSP70"/>
    <property type="match status" value="1"/>
</dbReference>
<dbReference type="PRINTS" id="PR00301">
    <property type="entry name" value="HEATSHOCK70"/>
</dbReference>
<dbReference type="SUPFAM" id="SSF53067">
    <property type="entry name" value="Actin-like ATPase domain"/>
    <property type="match status" value="2"/>
</dbReference>
<dbReference type="SUPFAM" id="SSF100934">
    <property type="entry name" value="Heat shock protein 70kD (HSP70), C-terminal subdomain"/>
    <property type="match status" value="1"/>
</dbReference>
<dbReference type="SUPFAM" id="SSF100920">
    <property type="entry name" value="Heat shock protein 70kD (HSP70), peptide-binding domain"/>
    <property type="match status" value="1"/>
</dbReference>
<dbReference type="PROSITE" id="PS00297">
    <property type="entry name" value="HSP70_1"/>
    <property type="match status" value="1"/>
</dbReference>
<dbReference type="PROSITE" id="PS00329">
    <property type="entry name" value="HSP70_2"/>
    <property type="match status" value="1"/>
</dbReference>
<dbReference type="PROSITE" id="PS01036">
    <property type="entry name" value="HSP70_3"/>
    <property type="match status" value="1"/>
</dbReference>
<name>DNAK_SALPA</name>
<keyword id="KW-0067">ATP-binding</keyword>
<keyword id="KW-0143">Chaperone</keyword>
<keyword id="KW-0547">Nucleotide-binding</keyword>
<keyword id="KW-0597">Phosphoprotein</keyword>
<keyword id="KW-0346">Stress response</keyword>
<comment type="function">
    <text evidence="1">Acts as a chaperone.</text>
</comment>
<comment type="induction">
    <text evidence="1">By stress conditions e.g. heat shock.</text>
</comment>
<comment type="similarity">
    <text evidence="1">Belongs to the heat shock protein 70 family.</text>
</comment>
<proteinExistence type="inferred from homology"/>
<sequence length="638" mass="69231">MGKIIGIDLGTTNSCVAIMDGTQARVLENAEGDRTTPSIIAYTQDGETLVGQPAKRQAVTNPQNTLFAIKRLIGRRFQDEEVQRDVSIMPYKIIGADNGDAWLDVKGQKMAPPQISAEVLKKMKKTAEDYLGEPVTEAVITVPAYFNDAQRQATKDAGRIAGLEVKRIINEPTAAALAYGLDKEVGNRTIAVYDLGGGTFDISIIEIDEVDGEKTFEVLATNGDTHLGGEDFDTRLINYLVDEFKKDQGIDLRNDPLAMQRLKEAAEKAKIELSSAQQTDVNLPYITADATGPKHMNIKVTRAKLESLVEDLVNRSIEPLKVALQDAGLSVSDINDVILVGGQTRMPMVQKKVAEFFGKEPRKDVNPDEAVAIGAAVQGGVLTGDVKDVLLLDVTPLSLGIETMGGVMTPLITKNTTIPTKHSQVFSTAEDNQSAVTIHVLQGERKRASDNKSLGQFNLDGINPAPRGMPQIEVTFDIDADGILHVSAKDKNSGKEQKITIKASSGLNEEEIQKMVRDAEANAESDRKFEELVQTRNQGDHLLHSTRKQVEEAGDKLPADDKTAIESALSALETALKGEDKAAIEAKMQELAQVSQKLMEIAQQQHAQQQAGSADASANNAKDDDVVDAEFEEVKDKK</sequence>
<accession>Q5PDJ5</accession>
<protein>
    <recommendedName>
        <fullName evidence="1">Chaperone protein DnaK</fullName>
    </recommendedName>
    <alternativeName>
        <fullName evidence="1">HSP70</fullName>
    </alternativeName>
    <alternativeName>
        <fullName evidence="1">Heat shock 70 kDa protein</fullName>
    </alternativeName>
    <alternativeName>
        <fullName evidence="1">Heat shock protein 70</fullName>
    </alternativeName>
</protein>
<reference key="1">
    <citation type="journal article" date="2004" name="Nat. Genet.">
        <title>Comparison of genome degradation in Paratyphi A and Typhi, human-restricted serovars of Salmonella enterica that cause typhoid.</title>
        <authorList>
            <person name="McClelland M."/>
            <person name="Sanderson K.E."/>
            <person name="Clifton S.W."/>
            <person name="Latreille P."/>
            <person name="Porwollik S."/>
            <person name="Sabo A."/>
            <person name="Meyer R."/>
            <person name="Bieri T."/>
            <person name="Ozersky P."/>
            <person name="McLellan M."/>
            <person name="Harkins C.R."/>
            <person name="Wang C."/>
            <person name="Nguyen C."/>
            <person name="Berghoff A."/>
            <person name="Elliott G."/>
            <person name="Kohlberg S."/>
            <person name="Strong C."/>
            <person name="Du F."/>
            <person name="Carter J."/>
            <person name="Kremizki C."/>
            <person name="Layman D."/>
            <person name="Leonard S."/>
            <person name="Sun H."/>
            <person name="Fulton L."/>
            <person name="Nash W."/>
            <person name="Miner T."/>
            <person name="Minx P."/>
            <person name="Delehaunty K."/>
            <person name="Fronick C."/>
            <person name="Magrini V."/>
            <person name="Nhan M."/>
            <person name="Warren W."/>
            <person name="Florea L."/>
            <person name="Spieth J."/>
            <person name="Wilson R.K."/>
        </authorList>
    </citation>
    <scope>NUCLEOTIDE SEQUENCE [LARGE SCALE GENOMIC DNA]</scope>
    <source>
        <strain>ATCC 9150 / SARB42</strain>
    </source>
</reference>
<evidence type="ECO:0000255" key="1">
    <source>
        <dbReference type="HAMAP-Rule" id="MF_00332"/>
    </source>
</evidence>
<evidence type="ECO:0000256" key="2">
    <source>
        <dbReference type="SAM" id="MobiDB-lite"/>
    </source>
</evidence>
<gene>
    <name evidence="1" type="primary">dnaK</name>
    <name type="ordered locus">SPA0012</name>
</gene>
<feature type="chain" id="PRO_0000226007" description="Chaperone protein DnaK">
    <location>
        <begin position="1"/>
        <end position="638"/>
    </location>
</feature>
<feature type="region of interest" description="Disordered" evidence="2">
    <location>
        <begin position="603"/>
        <end position="638"/>
    </location>
</feature>
<feature type="compositionally biased region" description="Low complexity" evidence="2">
    <location>
        <begin position="603"/>
        <end position="620"/>
    </location>
</feature>
<feature type="modified residue" description="Phosphothreonine; by autocatalysis" evidence="1">
    <location>
        <position position="199"/>
    </location>
</feature>
<organism>
    <name type="scientific">Salmonella paratyphi A (strain ATCC 9150 / SARB42)</name>
    <dbReference type="NCBI Taxonomy" id="295319"/>
    <lineage>
        <taxon>Bacteria</taxon>
        <taxon>Pseudomonadati</taxon>
        <taxon>Pseudomonadota</taxon>
        <taxon>Gammaproteobacteria</taxon>
        <taxon>Enterobacterales</taxon>
        <taxon>Enterobacteriaceae</taxon>
        <taxon>Salmonella</taxon>
    </lineage>
</organism>